<keyword id="KW-1015">Disulfide bond</keyword>
<keyword id="KW-0325">Glycoprotein</keyword>
<keyword id="KW-1199">Hemostasis impairing toxin</keyword>
<keyword id="KW-0378">Hydrolase</keyword>
<keyword id="KW-0645">Protease</keyword>
<keyword id="KW-0964">Secreted</keyword>
<keyword id="KW-0720">Serine protease</keyword>
<keyword id="KW-0732">Signal</keyword>
<keyword id="KW-0800">Toxin</keyword>
<feature type="signal peptide" evidence="2">
    <location>
        <begin position="1"/>
        <end position="18"/>
    </location>
</feature>
<feature type="propeptide" id="PRO_0000416399" evidence="1">
    <location>
        <begin position="19"/>
        <end position="24"/>
    </location>
</feature>
<feature type="chain" id="PRO_0000416400" description="Serine protease VLSP-3">
    <location>
        <begin position="25"/>
        <end position="258"/>
    </location>
</feature>
<feature type="domain" description="Peptidase S1" evidence="3">
    <location>
        <begin position="25"/>
        <end position="249"/>
    </location>
</feature>
<feature type="active site" description="Charge relay system" evidence="1">
    <location>
        <position position="65"/>
    </location>
</feature>
<feature type="active site" description="Charge relay system" evidence="1">
    <location>
        <position position="110"/>
    </location>
</feature>
<feature type="active site" description="Charge relay system" evidence="1">
    <location>
        <position position="204"/>
    </location>
</feature>
<feature type="glycosylation site" description="N-linked (GlcNAc...) asparagine" evidence="2">
    <location>
        <position position="44"/>
    </location>
</feature>
<feature type="glycosylation site" description="N-linked (GlcNAc...) asparagine" evidence="2">
    <location>
        <position position="79"/>
    </location>
</feature>
<feature type="glycosylation site" description="N-linked (GlcNAc...) asparagine" evidence="2">
    <location>
        <position position="103"/>
    </location>
</feature>
<feature type="glycosylation site" description="N-linked (GlcNAc...) asparagine" evidence="2">
    <location>
        <position position="154"/>
    </location>
</feature>
<feature type="glycosylation site" description="N-linked (GlcNAc...) asparagine" evidence="2">
    <location>
        <position position="170"/>
    </location>
</feature>
<feature type="glycosylation site" description="N-linked (GlcNAc...) asparagine" evidence="2">
    <location>
        <position position="251"/>
    </location>
</feature>
<feature type="disulfide bond" evidence="3">
    <location>
        <begin position="31"/>
        <end position="163"/>
    </location>
</feature>
<feature type="disulfide bond" evidence="3">
    <location>
        <begin position="50"/>
        <end position="66"/>
    </location>
</feature>
<feature type="disulfide bond" evidence="3">
    <location>
        <begin position="98"/>
        <end position="256"/>
    </location>
</feature>
<feature type="disulfide bond" evidence="3">
    <location>
        <begin position="142"/>
        <end position="210"/>
    </location>
</feature>
<feature type="disulfide bond" evidence="3">
    <location>
        <begin position="174"/>
        <end position="189"/>
    </location>
</feature>
<feature type="disulfide bond" evidence="3">
    <location>
        <begin position="200"/>
        <end position="225"/>
    </location>
</feature>
<accession>E0Y420</accession>
<proteinExistence type="evidence at transcript level"/>
<comment type="function">
    <text evidence="1">Snake venom serine protease that may act in the hemostasis system of the prey.</text>
</comment>
<comment type="subunit">
    <text evidence="1">Monomer.</text>
</comment>
<comment type="subcellular location">
    <subcellularLocation>
        <location evidence="1">Secreted</location>
    </subcellularLocation>
</comment>
<comment type="tissue specificity">
    <text>Expressed by the venom gland.</text>
</comment>
<comment type="similarity">
    <text evidence="3">Belongs to the peptidase S1 family. Snake venom subfamily.</text>
</comment>
<name>VSP3_MACLB</name>
<protein>
    <recommendedName>
        <fullName>Serine protease VLSP-3</fullName>
        <ecNumber>3.4.21.-</ecNumber>
    </recommendedName>
    <alternativeName>
        <fullName>Snake venom serine protease</fullName>
        <shortName>SVSP</shortName>
    </alternativeName>
</protein>
<sequence length="258" mass="28352">MVLIRVLANLLVLQLSYAQKSSELVIGGDECNINEHRSLVYLYNDSNFQCGGTLINQEWVLSAAHCDMENMEIYLGVHNLSLPNKDQKRRDPKEKFFCLSSKNYTKWDKDIMLIKLNRPVKTSTHIAPLSLPSSPPSVGSVCRIMGWGTVTSPNETLLDVPHCANINILNYTVCRAASPRLPTQSRTLCAGILQGGIDACKGDSGGPLICNGQIQGIVSWGNHPCAQPLKPGHYTHVFDYTDWIQSIIAGNTTATCPP</sequence>
<reference key="1">
    <citation type="submission" date="2010-01" db="EMBL/GenBank/DDBJ databases">
        <title>Serine proteases from Vipera lebetina snake venom.</title>
        <authorList>
            <person name="Siigur E."/>
            <person name="Aaspollu A."/>
            <person name="Siigur J."/>
        </authorList>
    </citation>
    <scope>NUCLEOTIDE SEQUENCE [MRNA]</scope>
    <source>
        <tissue>Venom gland</tissue>
    </source>
</reference>
<dbReference type="EC" id="3.4.21.-"/>
<dbReference type="EMBL" id="GU570567">
    <property type="protein sequence ID" value="ADN04918.1"/>
    <property type="molecule type" value="mRNA"/>
</dbReference>
<dbReference type="SMR" id="E0Y420"/>
<dbReference type="GO" id="GO:0005576">
    <property type="term" value="C:extracellular region"/>
    <property type="evidence" value="ECO:0007669"/>
    <property type="project" value="UniProtKB-SubCell"/>
</dbReference>
<dbReference type="GO" id="GO:0030141">
    <property type="term" value="C:secretory granule"/>
    <property type="evidence" value="ECO:0007669"/>
    <property type="project" value="TreeGrafter"/>
</dbReference>
<dbReference type="GO" id="GO:0004252">
    <property type="term" value="F:serine-type endopeptidase activity"/>
    <property type="evidence" value="ECO:0007669"/>
    <property type="project" value="InterPro"/>
</dbReference>
<dbReference type="GO" id="GO:0090729">
    <property type="term" value="F:toxin activity"/>
    <property type="evidence" value="ECO:0007669"/>
    <property type="project" value="UniProtKB-KW"/>
</dbReference>
<dbReference type="GO" id="GO:0006508">
    <property type="term" value="P:proteolysis"/>
    <property type="evidence" value="ECO:0007669"/>
    <property type="project" value="UniProtKB-KW"/>
</dbReference>
<dbReference type="CDD" id="cd00190">
    <property type="entry name" value="Tryp_SPc"/>
    <property type="match status" value="1"/>
</dbReference>
<dbReference type="FunFam" id="2.40.10.10:FF:000158">
    <property type="entry name" value="Thrombin-like enzyme saxthrombin"/>
    <property type="match status" value="1"/>
</dbReference>
<dbReference type="FunFam" id="2.40.10.10:FF:000153">
    <property type="entry name" value="Venom plasminogen activator TSV-PA"/>
    <property type="match status" value="1"/>
</dbReference>
<dbReference type="Gene3D" id="2.40.10.10">
    <property type="entry name" value="Trypsin-like serine proteases"/>
    <property type="match status" value="2"/>
</dbReference>
<dbReference type="InterPro" id="IPR009003">
    <property type="entry name" value="Peptidase_S1_PA"/>
</dbReference>
<dbReference type="InterPro" id="IPR043504">
    <property type="entry name" value="Peptidase_S1_PA_chymotrypsin"/>
</dbReference>
<dbReference type="InterPro" id="IPR001314">
    <property type="entry name" value="Peptidase_S1A"/>
</dbReference>
<dbReference type="InterPro" id="IPR001254">
    <property type="entry name" value="Trypsin_dom"/>
</dbReference>
<dbReference type="InterPro" id="IPR018114">
    <property type="entry name" value="TRYPSIN_HIS"/>
</dbReference>
<dbReference type="InterPro" id="IPR033116">
    <property type="entry name" value="TRYPSIN_SER"/>
</dbReference>
<dbReference type="PANTHER" id="PTHR24271:SF47">
    <property type="entry name" value="KALLIKREIN-1"/>
    <property type="match status" value="1"/>
</dbReference>
<dbReference type="PANTHER" id="PTHR24271">
    <property type="entry name" value="KALLIKREIN-RELATED"/>
    <property type="match status" value="1"/>
</dbReference>
<dbReference type="Pfam" id="PF00089">
    <property type="entry name" value="Trypsin"/>
    <property type="match status" value="1"/>
</dbReference>
<dbReference type="PRINTS" id="PR00722">
    <property type="entry name" value="CHYMOTRYPSIN"/>
</dbReference>
<dbReference type="SMART" id="SM00020">
    <property type="entry name" value="Tryp_SPc"/>
    <property type="match status" value="1"/>
</dbReference>
<dbReference type="SUPFAM" id="SSF50494">
    <property type="entry name" value="Trypsin-like serine proteases"/>
    <property type="match status" value="1"/>
</dbReference>
<dbReference type="PROSITE" id="PS50240">
    <property type="entry name" value="TRYPSIN_DOM"/>
    <property type="match status" value="1"/>
</dbReference>
<dbReference type="PROSITE" id="PS00134">
    <property type="entry name" value="TRYPSIN_HIS"/>
    <property type="match status" value="1"/>
</dbReference>
<dbReference type="PROSITE" id="PS00135">
    <property type="entry name" value="TRYPSIN_SER"/>
    <property type="match status" value="1"/>
</dbReference>
<organism>
    <name type="scientific">Macrovipera lebetinus</name>
    <name type="common">Levantine viper</name>
    <name type="synonym">Vipera lebetina</name>
    <dbReference type="NCBI Taxonomy" id="3148341"/>
    <lineage>
        <taxon>Eukaryota</taxon>
        <taxon>Metazoa</taxon>
        <taxon>Chordata</taxon>
        <taxon>Craniata</taxon>
        <taxon>Vertebrata</taxon>
        <taxon>Euteleostomi</taxon>
        <taxon>Lepidosauria</taxon>
        <taxon>Squamata</taxon>
        <taxon>Bifurcata</taxon>
        <taxon>Unidentata</taxon>
        <taxon>Episquamata</taxon>
        <taxon>Toxicofera</taxon>
        <taxon>Serpentes</taxon>
        <taxon>Colubroidea</taxon>
        <taxon>Viperidae</taxon>
        <taxon>Viperinae</taxon>
        <taxon>Macrovipera</taxon>
    </lineage>
</organism>
<evidence type="ECO:0000250" key="1"/>
<evidence type="ECO:0000255" key="2"/>
<evidence type="ECO:0000255" key="3">
    <source>
        <dbReference type="PROSITE-ProRule" id="PRU00274"/>
    </source>
</evidence>